<name>YNFL_ECOLI</name>
<comment type="similarity">
    <text evidence="2">Belongs to the LysR transcriptional regulatory family.</text>
</comment>
<proteinExistence type="inferred from homology"/>
<sequence>MNIELRHLRYFVAVAEELHFGRAAARLNISQPPLSQQIQALEQQIGARLLARTNRSVLLTAAGKQFLADSRQILSMVDDAAARAERLHQGEAGELRIGFTSSAPFIRAVSDTLSLFRRDYPDVHLQTREMNTREQIAPLIEGTLDMGLLRNTALPESLEHAVIVHEPLMAMIPHDHPLANNPNVTLAELAKEPFVFFDPHVGTGLYDDILGLMRRYHLTPVITQEVGEAMTIIGLVSAGLGVSILPASFKRVQLNEMRWVPIAEEDAVSEMWLVWPKHHEQSPAARNFRIHLLNALR</sequence>
<protein>
    <recommendedName>
        <fullName>Uncharacterized HTH-type transcriptional regulator YnfL</fullName>
    </recommendedName>
</protein>
<evidence type="ECO:0000255" key="1">
    <source>
        <dbReference type="PROSITE-ProRule" id="PRU00253"/>
    </source>
</evidence>
<evidence type="ECO:0000305" key="2"/>
<keyword id="KW-0238">DNA-binding</keyword>
<keyword id="KW-1185">Reference proteome</keyword>
<keyword id="KW-0804">Transcription</keyword>
<keyword id="KW-0805">Transcription regulation</keyword>
<organism>
    <name type="scientific">Escherichia coli (strain K12)</name>
    <dbReference type="NCBI Taxonomy" id="83333"/>
    <lineage>
        <taxon>Bacteria</taxon>
        <taxon>Pseudomonadati</taxon>
        <taxon>Pseudomonadota</taxon>
        <taxon>Gammaproteobacteria</taxon>
        <taxon>Enterobacterales</taxon>
        <taxon>Enterobacteriaceae</taxon>
        <taxon>Escherichia</taxon>
    </lineage>
</organism>
<feature type="chain" id="PRO_0000105809" description="Uncharacterized HTH-type transcriptional regulator YnfL">
    <location>
        <begin position="1"/>
        <end position="297"/>
    </location>
</feature>
<feature type="domain" description="HTH lysR-type" evidence="1">
    <location>
        <begin position="1"/>
        <end position="60"/>
    </location>
</feature>
<feature type="DNA-binding region" description="H-T-H motif" evidence="1">
    <location>
        <begin position="20"/>
        <end position="40"/>
    </location>
</feature>
<reference key="1">
    <citation type="journal article" date="1996" name="DNA Res.">
        <title>A 570-kb DNA sequence of the Escherichia coli K-12 genome corresponding to the 28.0-40.1 min region on the linkage map.</title>
        <authorList>
            <person name="Aiba H."/>
            <person name="Baba T."/>
            <person name="Fujita K."/>
            <person name="Hayashi K."/>
            <person name="Inada T."/>
            <person name="Isono K."/>
            <person name="Itoh T."/>
            <person name="Kasai H."/>
            <person name="Kashimoto K."/>
            <person name="Kimura S."/>
            <person name="Kitakawa M."/>
            <person name="Kitagawa M."/>
            <person name="Makino K."/>
            <person name="Miki T."/>
            <person name="Mizobuchi K."/>
            <person name="Mori H."/>
            <person name="Mori T."/>
            <person name="Motomura K."/>
            <person name="Nakade S."/>
            <person name="Nakamura Y."/>
            <person name="Nashimoto H."/>
            <person name="Nishio Y."/>
            <person name="Oshima T."/>
            <person name="Saito N."/>
            <person name="Sampei G."/>
            <person name="Seki Y."/>
            <person name="Sivasundaram S."/>
            <person name="Tagami H."/>
            <person name="Takeda J."/>
            <person name="Takemoto K."/>
            <person name="Takeuchi Y."/>
            <person name="Wada C."/>
            <person name="Yamamoto Y."/>
            <person name="Horiuchi T."/>
        </authorList>
    </citation>
    <scope>NUCLEOTIDE SEQUENCE [LARGE SCALE GENOMIC DNA]</scope>
    <source>
        <strain>K12 / W3110 / ATCC 27325 / DSM 5911</strain>
    </source>
</reference>
<reference key="2">
    <citation type="journal article" date="1997" name="Science">
        <title>The complete genome sequence of Escherichia coli K-12.</title>
        <authorList>
            <person name="Blattner F.R."/>
            <person name="Plunkett G. III"/>
            <person name="Bloch C.A."/>
            <person name="Perna N.T."/>
            <person name="Burland V."/>
            <person name="Riley M."/>
            <person name="Collado-Vides J."/>
            <person name="Glasner J.D."/>
            <person name="Rode C.K."/>
            <person name="Mayhew G.F."/>
            <person name="Gregor J."/>
            <person name="Davis N.W."/>
            <person name="Kirkpatrick H.A."/>
            <person name="Goeden M.A."/>
            <person name="Rose D.J."/>
            <person name="Mau B."/>
            <person name="Shao Y."/>
        </authorList>
    </citation>
    <scope>NUCLEOTIDE SEQUENCE [LARGE SCALE GENOMIC DNA]</scope>
    <source>
        <strain>K12 / MG1655 / ATCC 47076</strain>
    </source>
</reference>
<reference key="3">
    <citation type="journal article" date="2006" name="Mol. Syst. Biol.">
        <title>Highly accurate genome sequences of Escherichia coli K-12 strains MG1655 and W3110.</title>
        <authorList>
            <person name="Hayashi K."/>
            <person name="Morooka N."/>
            <person name="Yamamoto Y."/>
            <person name="Fujita K."/>
            <person name="Isono K."/>
            <person name="Choi S."/>
            <person name="Ohtsubo E."/>
            <person name="Baba T."/>
            <person name="Wanner B.L."/>
            <person name="Mori H."/>
            <person name="Horiuchi T."/>
        </authorList>
    </citation>
    <scope>NUCLEOTIDE SEQUENCE [LARGE SCALE GENOMIC DNA]</scope>
    <source>
        <strain>K12 / W3110 / ATCC 27325 / DSM 5911</strain>
    </source>
</reference>
<accession>P77559</accession>
<gene>
    <name type="primary">ynfL</name>
    <name type="ordered locus">b1595</name>
    <name type="ordered locus">JW1587</name>
</gene>
<dbReference type="EMBL" id="U00096">
    <property type="protein sequence ID" value="AAC74667.1"/>
    <property type="molecule type" value="Genomic_DNA"/>
</dbReference>
<dbReference type="EMBL" id="AP009048">
    <property type="protein sequence ID" value="BAA15319.1"/>
    <property type="molecule type" value="Genomic_DNA"/>
</dbReference>
<dbReference type="PIR" id="E64915">
    <property type="entry name" value="E64915"/>
</dbReference>
<dbReference type="RefSeq" id="NP_416112.1">
    <property type="nucleotide sequence ID" value="NC_000913.3"/>
</dbReference>
<dbReference type="RefSeq" id="WP_001019525.1">
    <property type="nucleotide sequence ID" value="NZ_SSZK01000001.1"/>
</dbReference>
<dbReference type="SMR" id="P77559"/>
<dbReference type="BioGRID" id="4259120">
    <property type="interactions" value="79"/>
</dbReference>
<dbReference type="DIP" id="DIP-12771N"/>
<dbReference type="FunCoup" id="P77559">
    <property type="interactions" value="187"/>
</dbReference>
<dbReference type="IntAct" id="P77559">
    <property type="interactions" value="1"/>
</dbReference>
<dbReference type="STRING" id="511145.b1595"/>
<dbReference type="jPOST" id="P77559"/>
<dbReference type="PaxDb" id="511145-b1595"/>
<dbReference type="EnsemblBacteria" id="AAC74667">
    <property type="protein sequence ID" value="AAC74667"/>
    <property type="gene ID" value="b1595"/>
</dbReference>
<dbReference type="GeneID" id="946136"/>
<dbReference type="KEGG" id="ecj:JW1587"/>
<dbReference type="KEGG" id="eco:b1595"/>
<dbReference type="KEGG" id="ecoc:C3026_09185"/>
<dbReference type="PATRIC" id="fig|1411691.4.peg.667"/>
<dbReference type="EchoBASE" id="EB3611"/>
<dbReference type="eggNOG" id="COG0583">
    <property type="taxonomic scope" value="Bacteria"/>
</dbReference>
<dbReference type="HOGENOM" id="CLU_039613_6_4_6"/>
<dbReference type="InParanoid" id="P77559"/>
<dbReference type="OMA" id="MFRHGYD"/>
<dbReference type="OrthoDB" id="5289754at2"/>
<dbReference type="PhylomeDB" id="P77559"/>
<dbReference type="BioCyc" id="EcoCyc:G6853-MONOMER"/>
<dbReference type="PRO" id="PR:P77559"/>
<dbReference type="Proteomes" id="UP000000625">
    <property type="component" value="Chromosome"/>
</dbReference>
<dbReference type="GO" id="GO:0032993">
    <property type="term" value="C:protein-DNA complex"/>
    <property type="evidence" value="ECO:0000318"/>
    <property type="project" value="GO_Central"/>
</dbReference>
<dbReference type="GO" id="GO:0003677">
    <property type="term" value="F:DNA binding"/>
    <property type="evidence" value="ECO:0007669"/>
    <property type="project" value="UniProtKB-KW"/>
</dbReference>
<dbReference type="GO" id="GO:0003700">
    <property type="term" value="F:DNA-binding transcription factor activity"/>
    <property type="evidence" value="ECO:0000318"/>
    <property type="project" value="GO_Central"/>
</dbReference>
<dbReference type="GO" id="GO:0006355">
    <property type="term" value="P:regulation of DNA-templated transcription"/>
    <property type="evidence" value="ECO:0000318"/>
    <property type="project" value="GO_Central"/>
</dbReference>
<dbReference type="CDD" id="cd08414">
    <property type="entry name" value="PBP2_LTTR_aromatics_like"/>
    <property type="match status" value="1"/>
</dbReference>
<dbReference type="FunFam" id="1.10.10.10:FF:000001">
    <property type="entry name" value="LysR family transcriptional regulator"/>
    <property type="match status" value="1"/>
</dbReference>
<dbReference type="FunFam" id="3.40.190.10:FF:000098">
    <property type="entry name" value="LysR family transcriptional regulator"/>
    <property type="match status" value="1"/>
</dbReference>
<dbReference type="Gene3D" id="3.40.190.10">
    <property type="entry name" value="Periplasmic binding protein-like II"/>
    <property type="match status" value="2"/>
</dbReference>
<dbReference type="Gene3D" id="1.10.10.10">
    <property type="entry name" value="Winged helix-like DNA-binding domain superfamily/Winged helix DNA-binding domain"/>
    <property type="match status" value="1"/>
</dbReference>
<dbReference type="InterPro" id="IPR005119">
    <property type="entry name" value="LysR_subst-bd"/>
</dbReference>
<dbReference type="InterPro" id="IPR000847">
    <property type="entry name" value="Tscrpt_reg_HTH_LysR"/>
</dbReference>
<dbReference type="InterPro" id="IPR036388">
    <property type="entry name" value="WH-like_DNA-bd_sf"/>
</dbReference>
<dbReference type="InterPro" id="IPR036390">
    <property type="entry name" value="WH_DNA-bd_sf"/>
</dbReference>
<dbReference type="PANTHER" id="PTHR30346:SF17">
    <property type="entry name" value="LYSR FAMILY TRANSCRIPTIONAL REGULATOR"/>
    <property type="match status" value="1"/>
</dbReference>
<dbReference type="PANTHER" id="PTHR30346">
    <property type="entry name" value="TRANSCRIPTIONAL DUAL REGULATOR HCAR-RELATED"/>
    <property type="match status" value="1"/>
</dbReference>
<dbReference type="Pfam" id="PF00126">
    <property type="entry name" value="HTH_1"/>
    <property type="match status" value="1"/>
</dbReference>
<dbReference type="Pfam" id="PF03466">
    <property type="entry name" value="LysR_substrate"/>
    <property type="match status" value="1"/>
</dbReference>
<dbReference type="PRINTS" id="PR00039">
    <property type="entry name" value="HTHLYSR"/>
</dbReference>
<dbReference type="SUPFAM" id="SSF53850">
    <property type="entry name" value="Periplasmic binding protein-like II"/>
    <property type="match status" value="1"/>
</dbReference>
<dbReference type="SUPFAM" id="SSF46785">
    <property type="entry name" value="Winged helix' DNA-binding domain"/>
    <property type="match status" value="1"/>
</dbReference>
<dbReference type="PROSITE" id="PS50931">
    <property type="entry name" value="HTH_LYSR"/>
    <property type="match status" value="1"/>
</dbReference>